<organism>
    <name type="scientific">Danio rerio</name>
    <name type="common">Zebrafish</name>
    <name type="synonym">Brachydanio rerio</name>
    <dbReference type="NCBI Taxonomy" id="7955"/>
    <lineage>
        <taxon>Eukaryota</taxon>
        <taxon>Metazoa</taxon>
        <taxon>Chordata</taxon>
        <taxon>Craniata</taxon>
        <taxon>Vertebrata</taxon>
        <taxon>Euteleostomi</taxon>
        <taxon>Actinopterygii</taxon>
        <taxon>Neopterygii</taxon>
        <taxon>Teleostei</taxon>
        <taxon>Ostariophysi</taxon>
        <taxon>Cypriniformes</taxon>
        <taxon>Danionidae</taxon>
        <taxon>Danioninae</taxon>
        <taxon>Danio</taxon>
    </lineage>
</organism>
<proteinExistence type="inferred from homology"/>
<reference key="1">
    <citation type="submission" date="2003-10" db="EMBL/GenBank/DDBJ databases">
        <authorList>
            <consortium name="NIH - Zebrafish Gene Collection (ZGC) project"/>
        </authorList>
    </citation>
    <scope>NUCLEOTIDE SEQUENCE [LARGE SCALE MRNA]</scope>
    <source>
        <tissue>Eye</tissue>
    </source>
</reference>
<keyword id="KW-0963">Cytoplasm</keyword>
<keyword id="KW-0472">Membrane</keyword>
<keyword id="KW-0539">Nucleus</keyword>
<keyword id="KW-1185">Reference proteome</keyword>
<accession>Q6PBT6</accession>
<evidence type="ECO:0000250" key="1"/>
<evidence type="ECO:0000305" key="2"/>
<protein>
    <recommendedName>
        <fullName>GTP cyclohydrolase 1 feedback regulatory protein</fullName>
        <shortName>GFRP</shortName>
    </recommendedName>
    <alternativeName>
        <fullName>GTP cyclohydrolase I feedback regulatory protein</fullName>
    </alternativeName>
</protein>
<gene>
    <name type="primary">gchfr</name>
</gene>
<dbReference type="EMBL" id="BC059590">
    <property type="protein sequence ID" value="AAH59590.1"/>
    <property type="molecule type" value="mRNA"/>
</dbReference>
<dbReference type="RefSeq" id="NP_957056.1">
    <property type="nucleotide sequence ID" value="NM_200762.3"/>
</dbReference>
<dbReference type="SMR" id="Q6PBT6"/>
<dbReference type="FunCoup" id="Q6PBT6">
    <property type="interactions" value="818"/>
</dbReference>
<dbReference type="STRING" id="7955.ENSDARP00000135960"/>
<dbReference type="PaxDb" id="7955-ENSDARP00000022896"/>
<dbReference type="Ensembl" id="ENSDART00000160400">
    <property type="protein sequence ID" value="ENSDARP00000135960"/>
    <property type="gene ID" value="ENSDARG00000098588"/>
</dbReference>
<dbReference type="GeneID" id="393735"/>
<dbReference type="KEGG" id="dre:393735"/>
<dbReference type="AGR" id="ZFIN:ZDB-GENE-040426-1731"/>
<dbReference type="CTD" id="2644"/>
<dbReference type="ZFIN" id="ZDB-GENE-040426-1731">
    <property type="gene designation" value="gchfr"/>
</dbReference>
<dbReference type="eggNOG" id="ENOG502S4A0">
    <property type="taxonomic scope" value="Eukaryota"/>
</dbReference>
<dbReference type="HOGENOM" id="CLU_195651_0_0_1"/>
<dbReference type="InParanoid" id="Q6PBT6"/>
<dbReference type="OMA" id="PNLMHYL"/>
<dbReference type="OrthoDB" id="259708at2759"/>
<dbReference type="PhylomeDB" id="Q6PBT6"/>
<dbReference type="TreeFam" id="TF329303"/>
<dbReference type="PRO" id="PR:Q6PBT6"/>
<dbReference type="Proteomes" id="UP000000437">
    <property type="component" value="Chromosome 17"/>
</dbReference>
<dbReference type="Bgee" id="ENSDARG00000098588">
    <property type="expression patterns" value="Expressed in liver and 22 other cell types or tissues"/>
</dbReference>
<dbReference type="GO" id="GO:0005737">
    <property type="term" value="C:cytoplasm"/>
    <property type="evidence" value="ECO:0000318"/>
    <property type="project" value="GO_Central"/>
</dbReference>
<dbReference type="GO" id="GO:0005829">
    <property type="term" value="C:cytosol"/>
    <property type="evidence" value="ECO:0007669"/>
    <property type="project" value="UniProtKB-SubCell"/>
</dbReference>
<dbReference type="GO" id="GO:0031965">
    <property type="term" value="C:nuclear membrane"/>
    <property type="evidence" value="ECO:0007669"/>
    <property type="project" value="UniProtKB-SubCell"/>
</dbReference>
<dbReference type="GO" id="GO:0005634">
    <property type="term" value="C:nucleus"/>
    <property type="evidence" value="ECO:0000318"/>
    <property type="project" value="GO_Central"/>
</dbReference>
<dbReference type="GO" id="GO:0044549">
    <property type="term" value="F:GTP cyclohydrolase binding"/>
    <property type="evidence" value="ECO:0000318"/>
    <property type="project" value="GO_Central"/>
</dbReference>
<dbReference type="GO" id="GO:0009890">
    <property type="term" value="P:negative regulation of biosynthetic process"/>
    <property type="evidence" value="ECO:0007669"/>
    <property type="project" value="InterPro"/>
</dbReference>
<dbReference type="FunFam" id="3.30.1410.10:FF:000001">
    <property type="entry name" value="GTP cyclohydrolase 1 feedback regulatory protein"/>
    <property type="match status" value="1"/>
</dbReference>
<dbReference type="Gene3D" id="3.30.1410.10">
    <property type="entry name" value="GTP cyclohydrolase I feedback regulatory protein GFRP"/>
    <property type="match status" value="1"/>
</dbReference>
<dbReference type="InterPro" id="IPR036717">
    <property type="entry name" value="GFRP_sf"/>
</dbReference>
<dbReference type="InterPro" id="IPR009112">
    <property type="entry name" value="GTP_CycHdrlase_I_reg"/>
</dbReference>
<dbReference type="PANTHER" id="PTHR16852">
    <property type="entry name" value="GTP CYCLOHYDROLASE 1 FEEDBACK REGULATORY PROTEIN"/>
    <property type="match status" value="1"/>
</dbReference>
<dbReference type="PANTHER" id="PTHR16852:SF2">
    <property type="entry name" value="GTP CYCLOHYDROLASE 1 FEEDBACK REGULATORY PROTEIN"/>
    <property type="match status" value="1"/>
</dbReference>
<dbReference type="Pfam" id="PF06399">
    <property type="entry name" value="GFRP"/>
    <property type="match status" value="1"/>
</dbReference>
<dbReference type="SUPFAM" id="SSF69761">
    <property type="entry name" value="GTP cyclohydrolase I feedback regulatory protein, GFRP"/>
    <property type="match status" value="1"/>
</dbReference>
<sequence>MPYILISTQIRLETGPTMVGDEYSDPSIMNYLGARKITVLGNNFSEYHVDEPPRLVLDKLDKIGYRVVSMTGVGQTLVWCLHKESSNTL</sequence>
<feature type="chain" id="PRO_0000189678" description="GTP cyclohydrolase 1 feedback regulatory protein">
    <location>
        <begin position="1"/>
        <end position="89"/>
    </location>
</feature>
<comment type="function">
    <text evidence="1">Mediates tetrahydrobiopterin inhibition of GTP cyclohydrolase 1.</text>
</comment>
<comment type="subunit">
    <text evidence="1">Homopentamer. Forms a complex with GCH1 where a GCH1 homodecamer is sandwiched by two GFRP homopentamers (By similarity).</text>
</comment>
<comment type="subcellular location">
    <subcellularLocation>
        <location evidence="1">Nucleus</location>
    </subcellularLocation>
    <subcellularLocation>
        <location evidence="1">Nucleus membrane</location>
    </subcellularLocation>
    <subcellularLocation>
        <location evidence="1">Cytoplasm</location>
        <location evidence="1">Cytosol</location>
    </subcellularLocation>
</comment>
<comment type="similarity">
    <text evidence="2">Belongs to the GFRP family.</text>
</comment>
<name>GFRP_DANRE</name>